<proteinExistence type="inferred from homology"/>
<evidence type="ECO:0000255" key="1">
    <source>
        <dbReference type="HAMAP-Rule" id="MF_01808"/>
    </source>
</evidence>
<evidence type="ECO:0000255" key="2">
    <source>
        <dbReference type="PROSITE-ProRule" id="PRU01246"/>
    </source>
</evidence>
<evidence type="ECO:0000255" key="3">
    <source>
        <dbReference type="PROSITE-ProRule" id="PRU01248"/>
    </source>
</evidence>
<feature type="chain" id="PRO_1000069996" description="Tyrosine recombinase XerC">
    <location>
        <begin position="1"/>
        <end position="315"/>
    </location>
</feature>
<feature type="domain" description="Core-binding (CB)" evidence="3">
    <location>
        <begin position="1"/>
        <end position="103"/>
    </location>
</feature>
<feature type="domain" description="Tyr recombinase" evidence="2">
    <location>
        <begin position="124"/>
        <end position="306"/>
    </location>
</feature>
<feature type="active site" evidence="1">
    <location>
        <position position="164"/>
    </location>
</feature>
<feature type="active site" evidence="1">
    <location>
        <position position="188"/>
    </location>
</feature>
<feature type="active site" evidence="1">
    <location>
        <position position="258"/>
    </location>
</feature>
<feature type="active site" evidence="1">
    <location>
        <position position="261"/>
    </location>
</feature>
<feature type="active site" evidence="1">
    <location>
        <position position="284"/>
    </location>
</feature>
<feature type="active site" description="O-(3'-phospho-DNA)-tyrosine intermediate" evidence="1">
    <location>
        <position position="293"/>
    </location>
</feature>
<name>XERC_CHLTA</name>
<protein>
    <recommendedName>
        <fullName evidence="1">Tyrosine recombinase XerC</fullName>
    </recommendedName>
</protein>
<dbReference type="EMBL" id="CP000051">
    <property type="protein sequence ID" value="AAX50611.1"/>
    <property type="molecule type" value="Genomic_DNA"/>
</dbReference>
<dbReference type="RefSeq" id="WP_009872581.1">
    <property type="nucleotide sequence ID" value="NC_007429.1"/>
</dbReference>
<dbReference type="SMR" id="Q3KM11"/>
<dbReference type="KEGG" id="cta:CTA_0376"/>
<dbReference type="HOGENOM" id="CLU_027562_9_0_0"/>
<dbReference type="Proteomes" id="UP000002532">
    <property type="component" value="Chromosome"/>
</dbReference>
<dbReference type="GO" id="GO:0005737">
    <property type="term" value="C:cytoplasm"/>
    <property type="evidence" value="ECO:0007669"/>
    <property type="project" value="UniProtKB-SubCell"/>
</dbReference>
<dbReference type="GO" id="GO:0003677">
    <property type="term" value="F:DNA binding"/>
    <property type="evidence" value="ECO:0007669"/>
    <property type="project" value="UniProtKB-KW"/>
</dbReference>
<dbReference type="GO" id="GO:0009037">
    <property type="term" value="F:tyrosine-based site-specific recombinase activity"/>
    <property type="evidence" value="ECO:0007669"/>
    <property type="project" value="UniProtKB-UniRule"/>
</dbReference>
<dbReference type="GO" id="GO:0051301">
    <property type="term" value="P:cell division"/>
    <property type="evidence" value="ECO:0007669"/>
    <property type="project" value="UniProtKB-KW"/>
</dbReference>
<dbReference type="GO" id="GO:0007059">
    <property type="term" value="P:chromosome segregation"/>
    <property type="evidence" value="ECO:0007669"/>
    <property type="project" value="UniProtKB-UniRule"/>
</dbReference>
<dbReference type="GO" id="GO:0006313">
    <property type="term" value="P:DNA transposition"/>
    <property type="evidence" value="ECO:0007669"/>
    <property type="project" value="UniProtKB-UniRule"/>
</dbReference>
<dbReference type="CDD" id="cd00798">
    <property type="entry name" value="INT_XerDC_C"/>
    <property type="match status" value="1"/>
</dbReference>
<dbReference type="Gene3D" id="1.10.150.130">
    <property type="match status" value="1"/>
</dbReference>
<dbReference type="Gene3D" id="1.10.443.10">
    <property type="entry name" value="Intergrase catalytic core"/>
    <property type="match status" value="1"/>
</dbReference>
<dbReference type="HAMAP" id="MF_01808">
    <property type="entry name" value="Recomb_XerC_XerD"/>
    <property type="match status" value="1"/>
</dbReference>
<dbReference type="InterPro" id="IPR044068">
    <property type="entry name" value="CB"/>
</dbReference>
<dbReference type="InterPro" id="IPR011010">
    <property type="entry name" value="DNA_brk_join_enz"/>
</dbReference>
<dbReference type="InterPro" id="IPR013762">
    <property type="entry name" value="Integrase-like_cat_sf"/>
</dbReference>
<dbReference type="InterPro" id="IPR002104">
    <property type="entry name" value="Integrase_catalytic"/>
</dbReference>
<dbReference type="InterPro" id="IPR010998">
    <property type="entry name" value="Integrase_recombinase_N"/>
</dbReference>
<dbReference type="InterPro" id="IPR004107">
    <property type="entry name" value="Integrase_SAM-like_N"/>
</dbReference>
<dbReference type="InterPro" id="IPR011931">
    <property type="entry name" value="Recomb_XerC"/>
</dbReference>
<dbReference type="InterPro" id="IPR023009">
    <property type="entry name" value="Tyrosine_recombinase_XerC/XerD"/>
</dbReference>
<dbReference type="InterPro" id="IPR050090">
    <property type="entry name" value="Tyrosine_recombinase_XerCD"/>
</dbReference>
<dbReference type="NCBIfam" id="TIGR02224">
    <property type="entry name" value="recomb_XerC"/>
    <property type="match status" value="1"/>
</dbReference>
<dbReference type="PANTHER" id="PTHR30349">
    <property type="entry name" value="PHAGE INTEGRASE-RELATED"/>
    <property type="match status" value="1"/>
</dbReference>
<dbReference type="PANTHER" id="PTHR30349:SF77">
    <property type="entry name" value="TYROSINE RECOMBINASE XERC"/>
    <property type="match status" value="1"/>
</dbReference>
<dbReference type="Pfam" id="PF02899">
    <property type="entry name" value="Phage_int_SAM_1"/>
    <property type="match status" value="1"/>
</dbReference>
<dbReference type="Pfam" id="PF00589">
    <property type="entry name" value="Phage_integrase"/>
    <property type="match status" value="1"/>
</dbReference>
<dbReference type="SUPFAM" id="SSF56349">
    <property type="entry name" value="DNA breaking-rejoining enzymes"/>
    <property type="match status" value="1"/>
</dbReference>
<dbReference type="PROSITE" id="PS51900">
    <property type="entry name" value="CB"/>
    <property type="match status" value="1"/>
</dbReference>
<dbReference type="PROSITE" id="PS51898">
    <property type="entry name" value="TYR_RECOMBINASE"/>
    <property type="match status" value="1"/>
</dbReference>
<keyword id="KW-0131">Cell cycle</keyword>
<keyword id="KW-0132">Cell division</keyword>
<keyword id="KW-0159">Chromosome partition</keyword>
<keyword id="KW-0963">Cytoplasm</keyword>
<keyword id="KW-0229">DNA integration</keyword>
<keyword id="KW-0233">DNA recombination</keyword>
<keyword id="KW-0238">DNA-binding</keyword>
<gene>
    <name evidence="1" type="primary">xerC</name>
    <name type="ordered locus">CTA_0376</name>
</gene>
<organism>
    <name type="scientific">Chlamydia trachomatis serovar A (strain ATCC VR-571B / DSM 19440 / HAR-13)</name>
    <dbReference type="NCBI Taxonomy" id="315277"/>
    <lineage>
        <taxon>Bacteria</taxon>
        <taxon>Pseudomonadati</taxon>
        <taxon>Chlamydiota</taxon>
        <taxon>Chlamydiia</taxon>
        <taxon>Chlamydiales</taxon>
        <taxon>Chlamydiaceae</taxon>
        <taxon>Chlamydia/Chlamydophila group</taxon>
        <taxon>Chlamydia</taxon>
    </lineage>
</organism>
<comment type="function">
    <text evidence="1">Site-specific tyrosine recombinase, which acts by catalyzing the cutting and rejoining of the recombining DNA molecules. The XerC-XerD complex is essential to convert dimers of the bacterial chromosome into monomers to permit their segregation at cell division. It also contributes to the segregational stability of plasmids.</text>
</comment>
<comment type="subunit">
    <text evidence="1">Forms a cyclic heterotetrameric complex composed of two molecules of XerC and two molecules of XerD.</text>
</comment>
<comment type="subcellular location">
    <subcellularLocation>
        <location evidence="1">Cytoplasm</location>
    </subcellularLocation>
</comment>
<comment type="similarity">
    <text evidence="1">Belongs to the 'phage' integrase family. XerC subfamily.</text>
</comment>
<accession>Q3KM11</accession>
<reference key="1">
    <citation type="journal article" date="2005" name="Infect. Immun.">
        <title>Comparative genomic analysis of Chlamydia trachomatis oculotropic and genitotropic strains.</title>
        <authorList>
            <person name="Carlson J.H."/>
            <person name="Porcella S.F."/>
            <person name="McClarty G."/>
            <person name="Caldwell H.D."/>
        </authorList>
    </citation>
    <scope>NUCLEOTIDE SEQUENCE [LARGE SCALE GENOMIC DNA]</scope>
    <source>
        <strain>ATCC VR-571B / DSM 19440 / HAR-13</strain>
    </source>
</reference>
<sequence length="315" mass="36572">MITSFYAFLDYLKNMKASSLHTLRNYCMDLSSLKCFLEKKSDLSPTPPLSLHDNTYDYPPLSFSLFTKDNIRLYLLEQIQTHHSKRTVRRRLSAIKSFARFCVKNQLIPENPAEMIRGPRLPQELPSPLTYEQVLALMAAPELDKVTGFRDRCLLELFYSSGLRISEITALNRADIDFQSHLLHIRGKGKKERIVPMTKVAVQWLQDYLNHPDRASVEQDHQACFLNRFGKRLSTRSIDRKFQQYLLKTGLSGSITPHTIRHTIATHWLERGMDLKTIQLLLGHTSLETTTIYTHVSMKLKKQIHDETHPHNLEE</sequence>